<protein>
    <recommendedName>
        <fullName>Uncharacterized lipoprotein MW2289</fullName>
    </recommendedName>
</protein>
<feature type="signal peptide" evidence="1">
    <location>
        <begin position="1"/>
        <end position="17"/>
    </location>
</feature>
<feature type="chain" id="PRO_0000296179" description="Uncharacterized lipoprotein MW2289">
    <location>
        <begin position="18"/>
        <end position="204"/>
    </location>
</feature>
<feature type="region of interest" description="Disordered" evidence="2">
    <location>
        <begin position="17"/>
        <end position="100"/>
    </location>
</feature>
<feature type="compositionally biased region" description="Basic and acidic residues" evidence="2">
    <location>
        <begin position="23"/>
        <end position="70"/>
    </location>
</feature>
<feature type="compositionally biased region" description="Low complexity" evidence="2">
    <location>
        <begin position="71"/>
        <end position="100"/>
    </location>
</feature>
<feature type="lipid moiety-binding region" description="N-palmitoyl cysteine" evidence="1">
    <location>
        <position position="18"/>
    </location>
</feature>
<feature type="lipid moiety-binding region" description="S-diacylglycerol cysteine" evidence="1">
    <location>
        <position position="18"/>
    </location>
</feature>
<dbReference type="EMBL" id="BA000033">
    <property type="protein sequence ID" value="BAB96154.1"/>
    <property type="molecule type" value="Genomic_DNA"/>
</dbReference>
<dbReference type="RefSeq" id="WP_000826997.1">
    <property type="nucleotide sequence ID" value="NC_003923.1"/>
</dbReference>
<dbReference type="KEGG" id="sam:MW2289"/>
<dbReference type="HOGENOM" id="CLU_088585_0_0_9"/>
<dbReference type="GO" id="GO:0005886">
    <property type="term" value="C:plasma membrane"/>
    <property type="evidence" value="ECO:0007669"/>
    <property type="project" value="UniProtKB-SubCell"/>
</dbReference>
<dbReference type="PROSITE" id="PS51257">
    <property type="entry name" value="PROKAR_LIPOPROTEIN"/>
    <property type="match status" value="1"/>
</dbReference>
<accession>Q8NV41</accession>
<keyword id="KW-1003">Cell membrane</keyword>
<keyword id="KW-0449">Lipoprotein</keyword>
<keyword id="KW-0472">Membrane</keyword>
<keyword id="KW-0564">Palmitate</keyword>
<keyword id="KW-0732">Signal</keyword>
<reference key="1">
    <citation type="journal article" date="2002" name="Lancet">
        <title>Genome and virulence determinants of high virulence community-acquired MRSA.</title>
        <authorList>
            <person name="Baba T."/>
            <person name="Takeuchi F."/>
            <person name="Kuroda M."/>
            <person name="Yuzawa H."/>
            <person name="Aoki K."/>
            <person name="Oguchi A."/>
            <person name="Nagai Y."/>
            <person name="Iwama N."/>
            <person name="Asano K."/>
            <person name="Naimi T."/>
            <person name="Kuroda H."/>
            <person name="Cui L."/>
            <person name="Yamamoto K."/>
            <person name="Hiramatsu K."/>
        </authorList>
    </citation>
    <scope>NUCLEOTIDE SEQUENCE [LARGE SCALE GENOMIC DNA]</scope>
    <source>
        <strain>MW2</strain>
    </source>
</reference>
<comment type="subcellular location">
    <subcellularLocation>
        <location evidence="1">Cell membrane</location>
        <topology evidence="1">Lipid-anchor</topology>
    </subcellularLocation>
</comment>
<proteinExistence type="inferred from homology"/>
<name>Y2289_STAAW</name>
<gene>
    <name type="ordered locus">MW2289</name>
</gene>
<organism>
    <name type="scientific">Staphylococcus aureus (strain MW2)</name>
    <dbReference type="NCBI Taxonomy" id="196620"/>
    <lineage>
        <taxon>Bacteria</taxon>
        <taxon>Bacillati</taxon>
        <taxon>Bacillota</taxon>
        <taxon>Bacilli</taxon>
        <taxon>Bacillales</taxon>
        <taxon>Staphylococcaceae</taxon>
        <taxon>Staphylococcus</taxon>
    </lineage>
</organism>
<sequence length="204" mass="22818">MKRLVTGLLALSLFLAACGQDSDQQKDGNKEKDDKAKTEQQDKKTNDSSKDKKDNKDDSKDVNKDNKDNSANDNQQQSNSNATNNDQNQTNNNQANNNQKSSYVAPYYGQNAAPVARQIYPFNGNKTQALQQLPNFQTALNAANNEANKFGSNNKVYNDYSIEEHNGNYKYVFSFKDPNANGKYSIVTVDYTGQAMVTDPNYQQ</sequence>
<evidence type="ECO:0000255" key="1">
    <source>
        <dbReference type="PROSITE-ProRule" id="PRU00303"/>
    </source>
</evidence>
<evidence type="ECO:0000256" key="2">
    <source>
        <dbReference type="SAM" id="MobiDB-lite"/>
    </source>
</evidence>